<sequence length="614" mass="70338">MASRVSDTGNGNENKENEGTVASDHSEARCSYILFEAECSDGGDDEESMEDSLVEDLVDDASVHQGNSLSLFHAQTVEEYEGEIQSLKRKFILSPLHRDVAELSPRLAGVSLEENRGKKARKSLFHDDSGIDSSAVEVSQLSSTPSAPGPDIRLPKPSDIDLEPLFQSRQRCTHMYSKFKAVYGVSFTDITRPFKSDKTTSQHWVVAAYYLAFDSEISAMEVLLRQQCQFLYIDNNDGIILFFLEYNVQKSRTTVYNWFTANFHYNENRMLANPPRTRNMPAALFFYHRFMGTGGIKHGAMPEIIVNQCVVSNQQTDTFELSRMVQWALDNDLQDEHMLALEYALLAESDGNARAFLKQNNQPMIVKNCSIMVRHYKTALVAKMSISQYVNKRCLDHGEADENSWRGIVHFLRYQGQEFLPFMCKMHNFLHHRPKKSTLVLCGPSDTGKSYFANGLNKFLDGHVLSFVSNGSHFWLSPLRGARCCLIDDATLTFWRYADQNMRALLDGYEISIDAKHRNPMQTRAPPLIITTNEDIMRLDEFKYLQTRTMYVYFNKPFPLKGNGQPLYYIDGYTWNSFFRKFWRHLNLKDPEDESDGETPGTIRLYTRADTDTI</sequence>
<name>VE1_HPV41</name>
<protein>
    <recommendedName>
        <fullName evidence="1">Replication protein E1</fullName>
        <ecNumber evidence="1">5.6.2.4</ecNumber>
    </recommendedName>
    <alternativeName>
        <fullName evidence="1">ATP-dependent helicase E1</fullName>
    </alternativeName>
    <alternativeName>
        <fullName evidence="1">DNA 3'-5' helicase E1</fullName>
    </alternativeName>
</protein>
<organismHost>
    <name type="scientific">Homo sapiens</name>
    <name type="common">Human</name>
    <dbReference type="NCBI Taxonomy" id="9606"/>
</organismHost>
<evidence type="ECO:0000255" key="1">
    <source>
        <dbReference type="HAMAP-Rule" id="MF_04000"/>
    </source>
</evidence>
<evidence type="ECO:0000256" key="2">
    <source>
        <dbReference type="SAM" id="MobiDB-lite"/>
    </source>
</evidence>
<reference key="1">
    <citation type="journal article" date="1991" name="Virus Res.">
        <title>Nucleotide sequence of human papillomavirus (HPV) type 41: an unusual HPV type without a typical E2 binding site consensus sequence.</title>
        <authorList>
            <person name="Hirt L."/>
            <person name="Hirsch-Behnam A."/>
            <person name="de Villiers E.M."/>
        </authorList>
    </citation>
    <scope>NUCLEOTIDE SEQUENCE [GENOMIC DNA]</scope>
</reference>
<organism>
    <name type="scientific">Human papillomavirus type 41</name>
    <dbReference type="NCBI Taxonomy" id="10589"/>
    <lineage>
        <taxon>Viruses</taxon>
        <taxon>Monodnaviria</taxon>
        <taxon>Shotokuvirae</taxon>
        <taxon>Cossaviricota</taxon>
        <taxon>Papovaviricetes</taxon>
        <taxon>Zurhausenvirales</taxon>
        <taxon>Papillomaviridae</taxon>
        <taxon>Firstpapillomavirinae</taxon>
        <taxon>Nupapillomavirus</taxon>
        <taxon>Nupapillomavirus 1</taxon>
    </lineage>
</organism>
<gene>
    <name evidence="1" type="primary">E1</name>
</gene>
<comment type="function">
    <text evidence="1">ATP-dependent DNA 3'-5' helicase required for initiation of viral DNA replication. It forms a complex with the viral E2 protein. The E1-E2 complex binds to the replication origin which contains binding sites for both proteins. During the initial step, a dimer of E1 interacts with a dimer of protein E2 leading to a complex that binds the viral origin of replication with high specificity. Then, a second dimer of E1 displaces the E2 dimer in an ATP-dependent manner to form the E1 tetramer. Following this, two E1 monomers are added to each half of the site, which results in the formation of two E1 trimers on the viral ori. Subsequently, two hexamers will be created. The double hexamer acts as a bi-directional helicase machinery and unwinds the viral DNA and then recruits the host DNA polymerase to start replication.</text>
</comment>
<comment type="catalytic activity">
    <reaction evidence="1">
        <text>Couples ATP hydrolysis with the unwinding of duplex DNA by translocating in the 3'-5' direction.</text>
        <dbReference type="EC" id="5.6.2.4"/>
    </reaction>
</comment>
<comment type="catalytic activity">
    <reaction evidence="1">
        <text>ATP + H2O = ADP + phosphate + H(+)</text>
        <dbReference type="Rhea" id="RHEA:13065"/>
        <dbReference type="ChEBI" id="CHEBI:15377"/>
        <dbReference type="ChEBI" id="CHEBI:15378"/>
        <dbReference type="ChEBI" id="CHEBI:30616"/>
        <dbReference type="ChEBI" id="CHEBI:43474"/>
        <dbReference type="ChEBI" id="CHEBI:456216"/>
        <dbReference type="EC" id="5.6.2.4"/>
    </reaction>
</comment>
<comment type="subunit">
    <text evidence="1">Can form hexamers. Interacts with E2 protein; this interaction increases E1 DNA binding specificity. Interacts with host DNA polymerase subunit POLA2. Interacts with host single stranded DNA-binding protein RPA1. Interacts with host TOP1; this interaction stimulates the enzymatic activity of TOP1.</text>
</comment>
<comment type="subcellular location">
    <subcellularLocation>
        <location evidence="1">Host nucleus</location>
    </subcellularLocation>
</comment>
<comment type="PTM">
    <text evidence="1">Phosphorylated.</text>
</comment>
<comment type="similarity">
    <text evidence="1">Belongs to the papillomaviridae E1 protein family.</text>
</comment>
<accession>P27551</accession>
<keyword id="KW-0067">ATP-binding</keyword>
<keyword id="KW-0235">DNA replication</keyword>
<keyword id="KW-0238">DNA-binding</keyword>
<keyword id="KW-0244">Early protein</keyword>
<keyword id="KW-0347">Helicase</keyword>
<keyword id="KW-1048">Host nucleus</keyword>
<keyword id="KW-0378">Hydrolase</keyword>
<keyword id="KW-0413">Isomerase</keyword>
<keyword id="KW-0547">Nucleotide-binding</keyword>
<keyword id="KW-0597">Phosphoprotein</keyword>
<keyword id="KW-1185">Reference proteome</keyword>
<feature type="chain" id="PRO_0000133139" description="Replication protein E1">
    <location>
        <begin position="1"/>
        <end position="614"/>
    </location>
</feature>
<feature type="domain" description="SF3 helicase" evidence="1">
    <location>
        <begin position="403"/>
        <end position="567"/>
    </location>
</feature>
<feature type="region of interest" description="Disordered" evidence="2">
    <location>
        <begin position="1"/>
        <end position="25"/>
    </location>
</feature>
<feature type="region of interest" description="Disordered" evidence="2">
    <location>
        <begin position="136"/>
        <end position="156"/>
    </location>
</feature>
<feature type="region of interest" description="DNA-binding region" evidence="1">
    <location>
        <begin position="154"/>
        <end position="316"/>
    </location>
</feature>
<feature type="short sequence motif" description="Nuclear localization signal" evidence="1">
    <location>
        <begin position="88"/>
        <end position="90"/>
    </location>
</feature>
<feature type="short sequence motif" description="Nuclear export signal" evidence="1">
    <location>
        <begin position="103"/>
        <end position="112"/>
    </location>
</feature>
<feature type="compositionally biased region" description="Basic and acidic residues" evidence="2">
    <location>
        <begin position="13"/>
        <end position="25"/>
    </location>
</feature>
<feature type="compositionally biased region" description="Polar residues" evidence="2">
    <location>
        <begin position="136"/>
        <end position="146"/>
    </location>
</feature>
<feature type="binding site" evidence="1">
    <location>
        <begin position="443"/>
        <end position="450"/>
    </location>
    <ligand>
        <name>ATP</name>
        <dbReference type="ChEBI" id="CHEBI:30616"/>
    </ligand>
</feature>
<feature type="modified residue" description="Phosphoserine; by host" evidence="1">
    <location>
        <position position="94"/>
    </location>
</feature>
<feature type="modified residue" description="Phosphoserine; by host" evidence="1">
    <location>
        <position position="104"/>
    </location>
</feature>
<dbReference type="EC" id="5.6.2.4" evidence="1"/>
<dbReference type="EMBL" id="X56147">
    <property type="protein sequence ID" value="CAA39614.1"/>
    <property type="molecule type" value="Genomic_DNA"/>
</dbReference>
<dbReference type="PIR" id="C43550">
    <property type="entry name" value="W1WL41"/>
</dbReference>
<dbReference type="SMR" id="P27551"/>
<dbReference type="KEGG" id="vg:1489277"/>
<dbReference type="OrthoDB" id="4795at10239"/>
<dbReference type="Proteomes" id="UP000006367">
    <property type="component" value="Genome"/>
</dbReference>
<dbReference type="GO" id="GO:0042025">
    <property type="term" value="C:host cell nucleus"/>
    <property type="evidence" value="ECO:0007669"/>
    <property type="project" value="UniProtKB-SubCell"/>
</dbReference>
<dbReference type="GO" id="GO:0005524">
    <property type="term" value="F:ATP binding"/>
    <property type="evidence" value="ECO:0007669"/>
    <property type="project" value="UniProtKB-UniRule"/>
</dbReference>
<dbReference type="GO" id="GO:0016887">
    <property type="term" value="F:ATP hydrolysis activity"/>
    <property type="evidence" value="ECO:0007669"/>
    <property type="project" value="RHEA"/>
</dbReference>
<dbReference type="GO" id="GO:0003677">
    <property type="term" value="F:DNA binding"/>
    <property type="evidence" value="ECO:0007669"/>
    <property type="project" value="UniProtKB-UniRule"/>
</dbReference>
<dbReference type="GO" id="GO:0003678">
    <property type="term" value="F:DNA helicase activity"/>
    <property type="evidence" value="ECO:0007669"/>
    <property type="project" value="UniProtKB-UniRule"/>
</dbReference>
<dbReference type="GO" id="GO:0006260">
    <property type="term" value="P:DNA replication"/>
    <property type="evidence" value="ECO:0007669"/>
    <property type="project" value="UniProtKB-UniRule"/>
</dbReference>
<dbReference type="Gene3D" id="3.40.1310.10">
    <property type="match status" value="1"/>
</dbReference>
<dbReference type="Gene3D" id="3.40.50.300">
    <property type="entry name" value="P-loop containing nucleotide triphosphate hydrolases"/>
    <property type="match status" value="1"/>
</dbReference>
<dbReference type="Gene3D" id="1.10.10.510">
    <property type="entry name" value="Zinc finger, large T-antigen D1 domain"/>
    <property type="match status" value="1"/>
</dbReference>
<dbReference type="HAMAP" id="MF_04000">
    <property type="entry name" value="PPV_E1"/>
    <property type="match status" value="1"/>
</dbReference>
<dbReference type="InterPro" id="IPR014015">
    <property type="entry name" value="Helicase_SF3_DNA-vir"/>
</dbReference>
<dbReference type="InterPro" id="IPR027417">
    <property type="entry name" value="P-loop_NTPase"/>
</dbReference>
<dbReference type="InterPro" id="IPR001177">
    <property type="entry name" value="PPV_DNA_helicase_E1_C"/>
</dbReference>
<dbReference type="InterPro" id="IPR014000">
    <property type="entry name" value="PPV_DNA_helicase_E1_N"/>
</dbReference>
<dbReference type="InterPro" id="IPR046832">
    <property type="entry name" value="PPV_E1_DBD"/>
</dbReference>
<dbReference type="InterPro" id="IPR046935">
    <property type="entry name" value="PPV_E1_DBD_sf"/>
</dbReference>
<dbReference type="InterPro" id="IPR016393">
    <property type="entry name" value="Rep_E1_papillomaV"/>
</dbReference>
<dbReference type="InterPro" id="IPR037102">
    <property type="entry name" value="Znf_lg_T-Ag_D1_dom_sf"/>
</dbReference>
<dbReference type="Pfam" id="PF00519">
    <property type="entry name" value="PPV_E1_C"/>
    <property type="match status" value="1"/>
</dbReference>
<dbReference type="Pfam" id="PF20450">
    <property type="entry name" value="PPV_E1_DBD"/>
    <property type="match status" value="1"/>
</dbReference>
<dbReference type="Pfam" id="PF00524">
    <property type="entry name" value="PPV_E1_N"/>
    <property type="match status" value="1"/>
</dbReference>
<dbReference type="PIRSF" id="PIRSF003383">
    <property type="entry name" value="Rep_E1_papillomaV"/>
    <property type="match status" value="1"/>
</dbReference>
<dbReference type="SUPFAM" id="SSF55464">
    <property type="entry name" value="Origin of replication-binding domain, RBD-like"/>
    <property type="match status" value="1"/>
</dbReference>
<dbReference type="SUPFAM" id="SSF52540">
    <property type="entry name" value="P-loop containing nucleoside triphosphate hydrolases"/>
    <property type="match status" value="1"/>
</dbReference>
<dbReference type="PROSITE" id="PS51206">
    <property type="entry name" value="SF3_HELICASE_1"/>
    <property type="match status" value="1"/>
</dbReference>
<proteinExistence type="inferred from homology"/>